<proteinExistence type="inferred from homology"/>
<reference key="1">
    <citation type="journal article" date="2004" name="Int. J. Syst. Evol. Microbiol.">
        <title>Postgenomic taxonomy of human ureaplasmas - a case study based on multiple gene sequences.</title>
        <authorList>
            <person name="Kong F."/>
            <person name="Gilbert G.L."/>
        </authorList>
    </citation>
    <scope>NUCLEOTIDE SEQUENCE [GENOMIC DNA]</scope>
</reference>
<reference key="2">
    <citation type="submission" date="2008-10" db="EMBL/GenBank/DDBJ databases">
        <title>Genome sequence of Ureaplasma urealyticum serovar 10 ATCC-33699.</title>
        <authorList>
            <person name="Shrivastava S."/>
            <person name="Methe B.A."/>
            <person name="Glass J."/>
            <person name="White K."/>
            <person name="Duffy L.B."/>
        </authorList>
    </citation>
    <scope>NUCLEOTIDE SEQUENCE [LARGE SCALE GENOMIC DNA]</scope>
    <source>
        <strain>ATCC 33699 / Western</strain>
    </source>
</reference>
<reference key="3">
    <citation type="journal article" date="1999" name="Int. J. Syst. Bacteriol.">
        <title>Phylogenetic analysis of Ureaplasma urealyticum -- support for the establishment of a new species, Ureaplasma parvum.</title>
        <authorList>
            <person name="Kong F."/>
            <person name="James G."/>
            <person name="Ma Z."/>
            <person name="Gordon S."/>
            <person name="Wang B."/>
            <person name="Gilbert G.L."/>
        </authorList>
    </citation>
    <scope>NUCLEOTIDE SEQUENCE [GENOMIC DNA] OF 1-135</scope>
</reference>
<name>URE1_UREU1</name>
<dbReference type="EC" id="3.5.1.5" evidence="1"/>
<dbReference type="EMBL" id="AF085726">
    <property type="protein sequence ID" value="AAD28124.2"/>
    <property type="molecule type" value="Genomic_DNA"/>
</dbReference>
<dbReference type="EMBL" id="CP001184">
    <property type="protein sequence ID" value="ACI59907.1"/>
    <property type="molecule type" value="Genomic_DNA"/>
</dbReference>
<dbReference type="RefSeq" id="WP_004025654.1">
    <property type="nucleotide sequence ID" value="NC_011374.1"/>
</dbReference>
<dbReference type="SMR" id="B5ZBS9"/>
<dbReference type="STRING" id="565575.UUR10_0477"/>
<dbReference type="GeneID" id="93848949"/>
<dbReference type="KEGG" id="uue:UUR10_0477"/>
<dbReference type="eggNOG" id="COG0804">
    <property type="taxonomic scope" value="Bacteria"/>
</dbReference>
<dbReference type="HOGENOM" id="CLU_000980_0_0_14"/>
<dbReference type="OrthoDB" id="9802793at2"/>
<dbReference type="UniPathway" id="UPA00258">
    <property type="reaction ID" value="UER00370"/>
</dbReference>
<dbReference type="Proteomes" id="UP000002018">
    <property type="component" value="Chromosome"/>
</dbReference>
<dbReference type="GO" id="GO:0005737">
    <property type="term" value="C:cytoplasm"/>
    <property type="evidence" value="ECO:0007669"/>
    <property type="project" value="UniProtKB-SubCell"/>
</dbReference>
<dbReference type="GO" id="GO:0016151">
    <property type="term" value="F:nickel cation binding"/>
    <property type="evidence" value="ECO:0007669"/>
    <property type="project" value="UniProtKB-UniRule"/>
</dbReference>
<dbReference type="GO" id="GO:0009039">
    <property type="term" value="F:urease activity"/>
    <property type="evidence" value="ECO:0007669"/>
    <property type="project" value="UniProtKB-UniRule"/>
</dbReference>
<dbReference type="GO" id="GO:0043419">
    <property type="term" value="P:urea catabolic process"/>
    <property type="evidence" value="ECO:0007669"/>
    <property type="project" value="UniProtKB-UniRule"/>
</dbReference>
<dbReference type="CDD" id="cd00375">
    <property type="entry name" value="Urease_alpha"/>
    <property type="match status" value="1"/>
</dbReference>
<dbReference type="Gene3D" id="3.20.20.140">
    <property type="entry name" value="Metal-dependent hydrolases"/>
    <property type="match status" value="1"/>
</dbReference>
<dbReference type="Gene3D" id="2.30.40.10">
    <property type="entry name" value="Urease, subunit C, domain 1"/>
    <property type="match status" value="1"/>
</dbReference>
<dbReference type="HAMAP" id="MF_01953">
    <property type="entry name" value="Urease_alpha"/>
    <property type="match status" value="1"/>
</dbReference>
<dbReference type="InterPro" id="IPR006680">
    <property type="entry name" value="Amidohydro-rel"/>
</dbReference>
<dbReference type="InterPro" id="IPR011059">
    <property type="entry name" value="Metal-dep_hydrolase_composite"/>
</dbReference>
<dbReference type="InterPro" id="IPR032466">
    <property type="entry name" value="Metal_Hydrolase"/>
</dbReference>
<dbReference type="InterPro" id="IPR011612">
    <property type="entry name" value="Urease_alpha_N_dom"/>
</dbReference>
<dbReference type="InterPro" id="IPR050112">
    <property type="entry name" value="Urease_alpha_subunit"/>
</dbReference>
<dbReference type="InterPro" id="IPR017950">
    <property type="entry name" value="Urease_AS"/>
</dbReference>
<dbReference type="InterPro" id="IPR005848">
    <property type="entry name" value="Urease_asu"/>
</dbReference>
<dbReference type="InterPro" id="IPR017951">
    <property type="entry name" value="Urease_asu_c"/>
</dbReference>
<dbReference type="InterPro" id="IPR029754">
    <property type="entry name" value="Urease_Ni-bd"/>
</dbReference>
<dbReference type="NCBIfam" id="NF009686">
    <property type="entry name" value="PRK13207.1"/>
    <property type="match status" value="1"/>
</dbReference>
<dbReference type="NCBIfam" id="TIGR01792">
    <property type="entry name" value="urease_alph"/>
    <property type="match status" value="1"/>
</dbReference>
<dbReference type="PANTHER" id="PTHR43440">
    <property type="entry name" value="UREASE"/>
    <property type="match status" value="1"/>
</dbReference>
<dbReference type="PANTHER" id="PTHR43440:SF1">
    <property type="entry name" value="UREASE"/>
    <property type="match status" value="1"/>
</dbReference>
<dbReference type="Pfam" id="PF01979">
    <property type="entry name" value="Amidohydro_1"/>
    <property type="match status" value="1"/>
</dbReference>
<dbReference type="Pfam" id="PF00449">
    <property type="entry name" value="Urease_alpha"/>
    <property type="match status" value="1"/>
</dbReference>
<dbReference type="PRINTS" id="PR01752">
    <property type="entry name" value="UREASE"/>
</dbReference>
<dbReference type="SUPFAM" id="SSF51338">
    <property type="entry name" value="Composite domain of metallo-dependent hydrolases"/>
    <property type="match status" value="1"/>
</dbReference>
<dbReference type="SUPFAM" id="SSF51556">
    <property type="entry name" value="Metallo-dependent hydrolases"/>
    <property type="match status" value="1"/>
</dbReference>
<dbReference type="PROSITE" id="PS01120">
    <property type="entry name" value="UREASE_1"/>
    <property type="match status" value="1"/>
</dbReference>
<dbReference type="PROSITE" id="PS00145">
    <property type="entry name" value="UREASE_2"/>
    <property type="match status" value="1"/>
</dbReference>
<dbReference type="PROSITE" id="PS51368">
    <property type="entry name" value="UREASE_3"/>
    <property type="match status" value="1"/>
</dbReference>
<organism>
    <name type="scientific">Ureaplasma urealyticum serovar 10 (strain ATCC 33699 / Western)</name>
    <dbReference type="NCBI Taxonomy" id="565575"/>
    <lineage>
        <taxon>Bacteria</taxon>
        <taxon>Bacillati</taxon>
        <taxon>Mycoplasmatota</taxon>
        <taxon>Mycoplasmoidales</taxon>
        <taxon>Mycoplasmoidaceae</taxon>
        <taxon>Ureaplasma</taxon>
    </lineage>
</organism>
<accession>B5ZBS9</accession>
<accession>P17272</accession>
<accession>Q56554</accession>
<accession>Q9R417</accession>
<evidence type="ECO:0000255" key="1">
    <source>
        <dbReference type="HAMAP-Rule" id="MF_01953"/>
    </source>
</evidence>
<sequence length="598" mass="64491">MFKISRKNYSDLYGITTGDSVRLGDTNLWVKVEKDLTTYGEESVFGGGKTLREGMGMNSTMKLDDKLGNAEVMDLVITNALILDYTGIYKADIGIKNGKIASIGKSGNPHLTDGVDMVVGISTEVSAGEGKIYTAGGLDTHVHWLEPEIVPVALDGGITTVIAGGTGMNDGTKATTVSPGKFWVKSALQAADGLPINAGFLAKGQGMEDPIFEQIVAGACGLKIHEDWGATGNAIDLALTVAEKTDVAVAIHTDTLNEAGFVEHTIAAMKGRTIHAYHTEGAGGGHAPDILESVKYAHILPASTNPTIPYTVNTIAEHLDMLMVCHHLNPKVPEDVAFADSRIRSQTIAAEDLLHDMGAISIMSSDTLAMGRIGEVVTRSWQMAHKMKAQFGALKGDSEFNDNNRVKRYVAKYTINPAIAHGIDSYVGSIEVGKLADIVAWEPKFFGAKPYYVVKMGVIARCVAGDPNASIPTCEPVIMRDQFGTYGRSLTSTSVSFVSKIGLENGIKEEYKLEKELLPVKNCRSINKKSMKWNSATPNLEVDPQTFDAAVDYNDLENWLEQPAAELAKKLKKTANGKYVLDAEPLTEAPLAQRYFLF</sequence>
<comment type="catalytic activity">
    <reaction evidence="1">
        <text>urea + 2 H2O + H(+) = hydrogencarbonate + 2 NH4(+)</text>
        <dbReference type="Rhea" id="RHEA:20557"/>
        <dbReference type="ChEBI" id="CHEBI:15377"/>
        <dbReference type="ChEBI" id="CHEBI:15378"/>
        <dbReference type="ChEBI" id="CHEBI:16199"/>
        <dbReference type="ChEBI" id="CHEBI:17544"/>
        <dbReference type="ChEBI" id="CHEBI:28938"/>
        <dbReference type="EC" id="3.5.1.5"/>
    </reaction>
</comment>
<comment type="cofactor">
    <cofactor evidence="1">
        <name>Ni cation</name>
        <dbReference type="ChEBI" id="CHEBI:25516"/>
    </cofactor>
    <text evidence="1">Binds 2 nickel ions per subunit.</text>
</comment>
<comment type="pathway">
    <text evidence="1">Nitrogen metabolism; urea degradation; CO(2) and NH(3) from urea (urease route): step 1/1.</text>
</comment>
<comment type="subunit">
    <text evidence="1">Heterotrimer of UreA (gamma), UreB (beta) and UreC (alpha) subunits. Three heterotrimers associate to form the active enzyme.</text>
</comment>
<comment type="subcellular location">
    <subcellularLocation>
        <location evidence="1">Cytoplasm</location>
    </subcellularLocation>
</comment>
<comment type="PTM">
    <text evidence="1">Carboxylation allows a single lysine to coordinate two nickel ions.</text>
</comment>
<comment type="similarity">
    <text evidence="1">Belongs to the metallo-dependent hydrolases superfamily. Urease alpha subunit family.</text>
</comment>
<gene>
    <name evidence="1" type="primary">ureC</name>
    <name type="ordered locus">UUR10_0477</name>
</gene>
<protein>
    <recommendedName>
        <fullName evidence="1">Urease subunit alpha</fullName>
        <ecNumber evidence="1">3.5.1.5</ecNumber>
    </recommendedName>
    <alternativeName>
        <fullName evidence="1">Urea amidohydrolase subunit alpha</fullName>
    </alternativeName>
</protein>
<keyword id="KW-0963">Cytoplasm</keyword>
<keyword id="KW-0378">Hydrolase</keyword>
<keyword id="KW-0479">Metal-binding</keyword>
<keyword id="KW-0533">Nickel</keyword>
<feature type="chain" id="PRO_1000188896" description="Urease subunit alpha">
    <location>
        <begin position="1"/>
        <end position="598"/>
    </location>
</feature>
<feature type="domain" description="Urease" evidence="1">
    <location>
        <begin position="136"/>
        <end position="598"/>
    </location>
</feature>
<feature type="active site" description="Proton donor" evidence="1">
    <location>
        <position position="326"/>
    </location>
</feature>
<feature type="binding site" evidence="1">
    <location>
        <position position="141"/>
    </location>
    <ligand>
        <name>Ni(2+)</name>
        <dbReference type="ChEBI" id="CHEBI:49786"/>
        <label>1</label>
    </ligand>
</feature>
<feature type="binding site" evidence="1">
    <location>
        <position position="143"/>
    </location>
    <ligand>
        <name>Ni(2+)</name>
        <dbReference type="ChEBI" id="CHEBI:49786"/>
        <label>1</label>
    </ligand>
</feature>
<feature type="binding site" description="via carbamate group" evidence="1">
    <location>
        <position position="223"/>
    </location>
    <ligand>
        <name>Ni(2+)</name>
        <dbReference type="ChEBI" id="CHEBI:49786"/>
        <label>1</label>
    </ligand>
</feature>
<feature type="binding site" description="via carbamate group" evidence="1">
    <location>
        <position position="223"/>
    </location>
    <ligand>
        <name>Ni(2+)</name>
        <dbReference type="ChEBI" id="CHEBI:49786"/>
        <label>2</label>
    </ligand>
</feature>
<feature type="binding site" evidence="1">
    <location>
        <position position="225"/>
    </location>
    <ligand>
        <name>substrate</name>
    </ligand>
</feature>
<feature type="binding site" evidence="1">
    <location>
        <position position="252"/>
    </location>
    <ligand>
        <name>Ni(2+)</name>
        <dbReference type="ChEBI" id="CHEBI:49786"/>
        <label>2</label>
    </ligand>
</feature>
<feature type="binding site" evidence="1">
    <location>
        <position position="278"/>
    </location>
    <ligand>
        <name>Ni(2+)</name>
        <dbReference type="ChEBI" id="CHEBI:49786"/>
        <label>2</label>
    </ligand>
</feature>
<feature type="binding site" evidence="1">
    <location>
        <position position="366"/>
    </location>
    <ligand>
        <name>Ni(2+)</name>
        <dbReference type="ChEBI" id="CHEBI:49786"/>
        <label>1</label>
    </ligand>
</feature>
<feature type="modified residue" description="N6-carboxylysine" evidence="1">
    <location>
        <position position="223"/>
    </location>
</feature>